<keyword id="KW-1185">Reference proteome</keyword>
<keyword id="KW-0687">Ribonucleoprotein</keyword>
<keyword id="KW-0689">Ribosomal protein</keyword>
<accession>Q2J2B4</accession>
<comment type="similarity">
    <text evidence="1">Belongs to the bacterial ribosomal protein bL34 family.</text>
</comment>
<dbReference type="EMBL" id="CP000250">
    <property type="protein sequence ID" value="ABD05396.1"/>
    <property type="molecule type" value="Genomic_DNA"/>
</dbReference>
<dbReference type="RefSeq" id="WP_008542748.1">
    <property type="nucleotide sequence ID" value="NC_007778.1"/>
</dbReference>
<dbReference type="SMR" id="Q2J2B4"/>
<dbReference type="STRING" id="316058.RPB_0685"/>
<dbReference type="GeneID" id="93218751"/>
<dbReference type="KEGG" id="rpb:RPB_0685"/>
<dbReference type="eggNOG" id="COG0230">
    <property type="taxonomic scope" value="Bacteria"/>
</dbReference>
<dbReference type="HOGENOM" id="CLU_129938_2_0_5"/>
<dbReference type="Proteomes" id="UP000008809">
    <property type="component" value="Chromosome"/>
</dbReference>
<dbReference type="GO" id="GO:1990904">
    <property type="term" value="C:ribonucleoprotein complex"/>
    <property type="evidence" value="ECO:0007669"/>
    <property type="project" value="UniProtKB-KW"/>
</dbReference>
<dbReference type="GO" id="GO:0005840">
    <property type="term" value="C:ribosome"/>
    <property type="evidence" value="ECO:0007669"/>
    <property type="project" value="UniProtKB-KW"/>
</dbReference>
<dbReference type="GO" id="GO:0003735">
    <property type="term" value="F:structural constituent of ribosome"/>
    <property type="evidence" value="ECO:0007669"/>
    <property type="project" value="InterPro"/>
</dbReference>
<dbReference type="GO" id="GO:0006412">
    <property type="term" value="P:translation"/>
    <property type="evidence" value="ECO:0007669"/>
    <property type="project" value="UniProtKB-UniRule"/>
</dbReference>
<dbReference type="FunFam" id="1.10.287.3980:FF:000001">
    <property type="entry name" value="Mitochondrial ribosomal protein L34"/>
    <property type="match status" value="1"/>
</dbReference>
<dbReference type="Gene3D" id="1.10.287.3980">
    <property type="match status" value="1"/>
</dbReference>
<dbReference type="HAMAP" id="MF_00391">
    <property type="entry name" value="Ribosomal_bL34"/>
    <property type="match status" value="1"/>
</dbReference>
<dbReference type="InterPro" id="IPR000271">
    <property type="entry name" value="Ribosomal_bL34"/>
</dbReference>
<dbReference type="InterPro" id="IPR020939">
    <property type="entry name" value="Ribosomal_bL34_CS"/>
</dbReference>
<dbReference type="NCBIfam" id="TIGR01030">
    <property type="entry name" value="rpmH_bact"/>
    <property type="match status" value="1"/>
</dbReference>
<dbReference type="PANTHER" id="PTHR14503:SF4">
    <property type="entry name" value="LARGE RIBOSOMAL SUBUNIT PROTEIN BL34M"/>
    <property type="match status" value="1"/>
</dbReference>
<dbReference type="PANTHER" id="PTHR14503">
    <property type="entry name" value="MITOCHONDRIAL RIBOSOMAL PROTEIN 34 FAMILY MEMBER"/>
    <property type="match status" value="1"/>
</dbReference>
<dbReference type="Pfam" id="PF00468">
    <property type="entry name" value="Ribosomal_L34"/>
    <property type="match status" value="1"/>
</dbReference>
<dbReference type="PROSITE" id="PS00784">
    <property type="entry name" value="RIBOSOMAL_L34"/>
    <property type="match status" value="1"/>
</dbReference>
<feature type="chain" id="PRO_1000013421" description="Large ribosomal subunit protein bL34">
    <location>
        <begin position="1"/>
        <end position="44"/>
    </location>
</feature>
<sequence length="44" mass="5090">MKRTYQPSKLVRKRRHGFRARLATAGGRKVLAARRARGRKRLSA</sequence>
<protein>
    <recommendedName>
        <fullName evidence="1">Large ribosomal subunit protein bL34</fullName>
    </recommendedName>
    <alternativeName>
        <fullName evidence="2">50S ribosomal protein L34</fullName>
    </alternativeName>
</protein>
<reference key="1">
    <citation type="submission" date="2006-01" db="EMBL/GenBank/DDBJ databases">
        <title>Complete sequence of Rhodopseudomonas palustris HaA2.</title>
        <authorList>
            <consortium name="US DOE Joint Genome Institute"/>
            <person name="Copeland A."/>
            <person name="Lucas S."/>
            <person name="Lapidus A."/>
            <person name="Barry K."/>
            <person name="Detter J.C."/>
            <person name="Glavina T."/>
            <person name="Hammon N."/>
            <person name="Israni S."/>
            <person name="Pitluck S."/>
            <person name="Chain P."/>
            <person name="Malfatti S."/>
            <person name="Shin M."/>
            <person name="Vergez L."/>
            <person name="Schmutz J."/>
            <person name="Larimer F."/>
            <person name="Land M."/>
            <person name="Hauser L."/>
            <person name="Pelletier D.A."/>
            <person name="Kyrpides N."/>
            <person name="Anderson I."/>
            <person name="Oda Y."/>
            <person name="Harwood C.S."/>
            <person name="Richardson P."/>
        </authorList>
    </citation>
    <scope>NUCLEOTIDE SEQUENCE [LARGE SCALE GENOMIC DNA]</scope>
    <source>
        <strain>HaA2</strain>
    </source>
</reference>
<organism>
    <name type="scientific">Rhodopseudomonas palustris (strain HaA2)</name>
    <dbReference type="NCBI Taxonomy" id="316058"/>
    <lineage>
        <taxon>Bacteria</taxon>
        <taxon>Pseudomonadati</taxon>
        <taxon>Pseudomonadota</taxon>
        <taxon>Alphaproteobacteria</taxon>
        <taxon>Hyphomicrobiales</taxon>
        <taxon>Nitrobacteraceae</taxon>
        <taxon>Rhodopseudomonas</taxon>
    </lineage>
</organism>
<gene>
    <name evidence="1" type="primary">rpmH</name>
    <name type="ordered locus">RPB_0685</name>
</gene>
<proteinExistence type="inferred from homology"/>
<evidence type="ECO:0000255" key="1">
    <source>
        <dbReference type="HAMAP-Rule" id="MF_00391"/>
    </source>
</evidence>
<evidence type="ECO:0000305" key="2"/>
<name>RL34_RHOP2</name>